<name>PTGA_STAAS</name>
<reference key="1">
    <citation type="journal article" date="2004" name="Proc. Natl. Acad. Sci. U.S.A.">
        <title>Complete genomes of two clinical Staphylococcus aureus strains: evidence for the rapid evolution of virulence and drug resistance.</title>
        <authorList>
            <person name="Holden M.T.G."/>
            <person name="Feil E.J."/>
            <person name="Lindsay J.A."/>
            <person name="Peacock S.J."/>
            <person name="Day N.P.J."/>
            <person name="Enright M.C."/>
            <person name="Foster T.J."/>
            <person name="Moore C.E."/>
            <person name="Hurst L."/>
            <person name="Atkin R."/>
            <person name="Barron A."/>
            <person name="Bason N."/>
            <person name="Bentley S.D."/>
            <person name="Chillingworth C."/>
            <person name="Chillingworth T."/>
            <person name="Churcher C."/>
            <person name="Clark L."/>
            <person name="Corton C."/>
            <person name="Cronin A."/>
            <person name="Doggett J."/>
            <person name="Dowd L."/>
            <person name="Feltwell T."/>
            <person name="Hance Z."/>
            <person name="Harris B."/>
            <person name="Hauser H."/>
            <person name="Holroyd S."/>
            <person name="Jagels K."/>
            <person name="James K.D."/>
            <person name="Lennard N."/>
            <person name="Line A."/>
            <person name="Mayes R."/>
            <person name="Moule S."/>
            <person name="Mungall K."/>
            <person name="Ormond D."/>
            <person name="Quail M.A."/>
            <person name="Rabbinowitsch E."/>
            <person name="Rutherford K.M."/>
            <person name="Sanders M."/>
            <person name="Sharp S."/>
            <person name="Simmonds M."/>
            <person name="Stevens K."/>
            <person name="Whitehead S."/>
            <person name="Barrell B.G."/>
            <person name="Spratt B.G."/>
            <person name="Parkhill J."/>
        </authorList>
    </citation>
    <scope>NUCLEOTIDE SEQUENCE [LARGE SCALE GENOMIC DNA]</scope>
    <source>
        <strain>MSSA476</strain>
    </source>
</reference>
<feature type="chain" id="PRO_0000186551" description="PTS system glucose-specific EIIA component">
    <location>
        <begin position="1"/>
        <end position="166"/>
    </location>
</feature>
<feature type="domain" description="PTS EIIA type-1" evidence="2">
    <location>
        <begin position="34"/>
        <end position="138"/>
    </location>
</feature>
<feature type="active site" description="Tele-phosphohistidine intermediate; for EIIA activity" evidence="1 2">
    <location>
        <position position="86"/>
    </location>
</feature>
<feature type="binding site" evidence="1">
    <location>
        <position position="71"/>
    </location>
    <ligand>
        <name>Zn(2+)</name>
        <dbReference type="ChEBI" id="CHEBI:29105"/>
        <note>ligand shared with glycerol kinase</note>
    </ligand>
</feature>
<feature type="binding site" evidence="1">
    <location>
        <position position="86"/>
    </location>
    <ligand>
        <name>Zn(2+)</name>
        <dbReference type="ChEBI" id="CHEBI:29105"/>
        <note>ligand shared with glycerol kinase</note>
    </ligand>
</feature>
<feature type="site" description="Important for phospho-donor activity" evidence="1">
    <location>
        <position position="71"/>
    </location>
</feature>
<feature type="modified residue" description="Phosphohistidine; by HPr" evidence="1">
    <location>
        <position position="86"/>
    </location>
</feature>
<keyword id="KW-0963">Cytoplasm</keyword>
<keyword id="KW-0418">Kinase</keyword>
<keyword id="KW-0479">Metal-binding</keyword>
<keyword id="KW-0597">Phosphoprotein</keyword>
<keyword id="KW-0598">Phosphotransferase system</keyword>
<keyword id="KW-0762">Sugar transport</keyword>
<keyword id="KW-0808">Transferase</keyword>
<keyword id="KW-0813">Transport</keyword>
<keyword id="KW-0862">Zinc</keyword>
<evidence type="ECO:0000250" key="1">
    <source>
        <dbReference type="UniProtKB" id="P69783"/>
    </source>
</evidence>
<evidence type="ECO:0000255" key="2">
    <source>
        <dbReference type="PROSITE-ProRule" id="PRU00416"/>
    </source>
</evidence>
<evidence type="ECO:0000305" key="3"/>
<proteinExistence type="inferred from homology"/>
<comment type="function">
    <text evidence="1">The phosphoenolpyruvate-dependent sugar phosphotransferase system (sugar PTS), a major carbohydrate active transport system, catalyzes the phosphorylation of incoming sugar substrates concomitantly with their translocation across the cell membrane. The enzyme II complex composed of PtsG and Crr is involved in glucose transport.</text>
</comment>
<comment type="cofactor">
    <cofactor evidence="1">
        <name>Zn(2+)</name>
        <dbReference type="ChEBI" id="CHEBI:29105"/>
    </cofactor>
    <text evidence="1">Binds 1 zinc ion per glycerol kinase EIIA-Glc dimer. The zinc ion is important for dimerization.</text>
</comment>
<comment type="subunit">
    <text evidence="1">Heterodimer with glycerol kinase (glpk).</text>
</comment>
<comment type="subcellular location">
    <subcellularLocation>
        <location evidence="3">Cytoplasm</location>
    </subcellularLocation>
</comment>
<comment type="domain">
    <text evidence="2">The EIIA domain is phosphorylated by phospho-HPr on a histidyl residue. Then, it transfers the phosphoryl group to the EIIB domain.</text>
</comment>
<dbReference type="EMBL" id="BX571857">
    <property type="protein sequence ID" value="CAG43141.1"/>
    <property type="molecule type" value="Genomic_DNA"/>
</dbReference>
<dbReference type="RefSeq" id="WP_000473657.1">
    <property type="nucleotide sequence ID" value="NC_002953.3"/>
</dbReference>
<dbReference type="SMR" id="Q6G9D9"/>
<dbReference type="KEGG" id="sas:SAS1365"/>
<dbReference type="HOGENOM" id="CLU_012312_5_3_9"/>
<dbReference type="GO" id="GO:0005737">
    <property type="term" value="C:cytoplasm"/>
    <property type="evidence" value="ECO:0007669"/>
    <property type="project" value="UniProtKB-SubCell"/>
</dbReference>
<dbReference type="GO" id="GO:0016301">
    <property type="term" value="F:kinase activity"/>
    <property type="evidence" value="ECO:0007669"/>
    <property type="project" value="UniProtKB-KW"/>
</dbReference>
<dbReference type="GO" id="GO:0046872">
    <property type="term" value="F:metal ion binding"/>
    <property type="evidence" value="ECO:0007669"/>
    <property type="project" value="UniProtKB-KW"/>
</dbReference>
<dbReference type="GO" id="GO:0009401">
    <property type="term" value="P:phosphoenolpyruvate-dependent sugar phosphotransferase system"/>
    <property type="evidence" value="ECO:0007669"/>
    <property type="project" value="UniProtKB-KW"/>
</dbReference>
<dbReference type="FunFam" id="2.70.70.10:FF:000001">
    <property type="entry name" value="PTS system glucose-specific IIA component"/>
    <property type="match status" value="1"/>
</dbReference>
<dbReference type="Gene3D" id="2.70.70.10">
    <property type="entry name" value="Glucose Permease (Domain IIA)"/>
    <property type="match status" value="1"/>
</dbReference>
<dbReference type="InterPro" id="IPR011055">
    <property type="entry name" value="Dup_hybrid_motif"/>
</dbReference>
<dbReference type="InterPro" id="IPR001127">
    <property type="entry name" value="PTS_EIIA_1_perm"/>
</dbReference>
<dbReference type="InterPro" id="IPR050890">
    <property type="entry name" value="PTS_EIIA_component"/>
</dbReference>
<dbReference type="NCBIfam" id="TIGR00830">
    <property type="entry name" value="PTBA"/>
    <property type="match status" value="1"/>
</dbReference>
<dbReference type="PANTHER" id="PTHR45008">
    <property type="entry name" value="PTS SYSTEM GLUCOSE-SPECIFIC EIIA COMPONENT"/>
    <property type="match status" value="1"/>
</dbReference>
<dbReference type="PANTHER" id="PTHR45008:SF1">
    <property type="entry name" value="PTS SYSTEM GLUCOSE-SPECIFIC EIIA COMPONENT"/>
    <property type="match status" value="1"/>
</dbReference>
<dbReference type="Pfam" id="PF00358">
    <property type="entry name" value="PTS_EIIA_1"/>
    <property type="match status" value="1"/>
</dbReference>
<dbReference type="SUPFAM" id="SSF51261">
    <property type="entry name" value="Duplicated hybrid motif"/>
    <property type="match status" value="1"/>
</dbReference>
<dbReference type="PROSITE" id="PS51093">
    <property type="entry name" value="PTS_EIIA_TYPE_1"/>
    <property type="match status" value="1"/>
</dbReference>
<dbReference type="PROSITE" id="PS00371">
    <property type="entry name" value="PTS_EIIA_TYPE_1_HIS"/>
    <property type="match status" value="1"/>
</dbReference>
<protein>
    <recommendedName>
        <fullName evidence="1">PTS system glucose-specific EIIA component</fullName>
    </recommendedName>
    <alternativeName>
        <fullName evidence="1">EIIA-Glc</fullName>
    </alternativeName>
    <alternativeName>
        <fullName evidence="1">EIII-Glc</fullName>
    </alternativeName>
    <alternativeName>
        <fullName evidence="1">Glucose-specific phosphotransferase enzyme IIA component</fullName>
    </alternativeName>
</protein>
<gene>
    <name type="primary">crr</name>
    <name type="ordered locus">SAS1365</name>
</gene>
<organism>
    <name type="scientific">Staphylococcus aureus (strain MSSA476)</name>
    <dbReference type="NCBI Taxonomy" id="282459"/>
    <lineage>
        <taxon>Bacteria</taxon>
        <taxon>Bacillati</taxon>
        <taxon>Bacillota</taxon>
        <taxon>Bacilli</taxon>
        <taxon>Bacillales</taxon>
        <taxon>Staphylococcaceae</taxon>
        <taxon>Staphylococcus</taxon>
    </lineage>
</organism>
<accession>Q6G9D9</accession>
<sequence length="166" mass="17991">MFKKLFGKGKEVQKDIAIYTPLTGEFVKIEDIPDPVFAQKMMGEGFGINPTEGEVVSPIAGRVDNVFPTKHAIGLKADNGLELLVHIGLDTVQLDGEGFEVLVSSGDEVNVGDPLVRFNLEYINNNAKSVISPIIITNTDQAASINIYDENAVIKGETKVIDVTMN</sequence>